<protein>
    <recommendedName>
        <fullName evidence="1">GMP synthase [glutamine-hydrolyzing]</fullName>
        <ecNumber evidence="1">6.3.5.2</ecNumber>
    </recommendedName>
    <alternativeName>
        <fullName evidence="1">GMP synthetase</fullName>
    </alternativeName>
    <alternativeName>
        <fullName evidence="1">Glutamine amidotransferase</fullName>
    </alternativeName>
</protein>
<feature type="chain" id="PRO_1000120314" description="GMP synthase [glutamine-hydrolyzing]">
    <location>
        <begin position="1"/>
        <end position="508"/>
    </location>
</feature>
<feature type="domain" description="Glutamine amidotransferase type-1" evidence="1">
    <location>
        <begin position="1"/>
        <end position="189"/>
    </location>
</feature>
<feature type="domain" description="GMPS ATP-PPase" evidence="1">
    <location>
        <begin position="190"/>
        <end position="383"/>
    </location>
</feature>
<feature type="active site" description="Nucleophile" evidence="1">
    <location>
        <position position="78"/>
    </location>
</feature>
<feature type="active site" evidence="1">
    <location>
        <position position="163"/>
    </location>
</feature>
<feature type="active site" evidence="1">
    <location>
        <position position="165"/>
    </location>
</feature>
<feature type="binding site" evidence="1">
    <location>
        <begin position="217"/>
        <end position="223"/>
    </location>
    <ligand>
        <name>ATP</name>
        <dbReference type="ChEBI" id="CHEBI:30616"/>
    </ligand>
</feature>
<keyword id="KW-0067">ATP-binding</keyword>
<keyword id="KW-0315">Glutamine amidotransferase</keyword>
<keyword id="KW-0332">GMP biosynthesis</keyword>
<keyword id="KW-0436">Ligase</keyword>
<keyword id="KW-0547">Nucleotide-binding</keyword>
<keyword id="KW-0658">Purine biosynthesis</keyword>
<gene>
    <name evidence="1" type="primary">guaA</name>
    <name type="ordered locus">Hac_0466</name>
</gene>
<name>GUAA_HELAH</name>
<proteinExistence type="inferred from homology"/>
<reference key="1">
    <citation type="journal article" date="2006" name="PLoS Genet.">
        <title>Who ate whom? Adaptive Helicobacter genomic changes that accompanied a host jump from early humans to large felines.</title>
        <authorList>
            <person name="Eppinger M."/>
            <person name="Baar C."/>
            <person name="Linz B."/>
            <person name="Raddatz G."/>
            <person name="Lanz C."/>
            <person name="Keller H."/>
            <person name="Morelli G."/>
            <person name="Gressmann H."/>
            <person name="Achtman M."/>
            <person name="Schuster S.C."/>
        </authorList>
    </citation>
    <scope>NUCLEOTIDE SEQUENCE [LARGE SCALE GENOMIC DNA]</scope>
    <source>
        <strain>Sheeba</strain>
    </source>
</reference>
<accession>Q17YH9</accession>
<comment type="function">
    <text evidence="1">Catalyzes the synthesis of GMP from XMP.</text>
</comment>
<comment type="catalytic activity">
    <reaction evidence="1">
        <text>XMP + L-glutamine + ATP + H2O = GMP + L-glutamate + AMP + diphosphate + 2 H(+)</text>
        <dbReference type="Rhea" id="RHEA:11680"/>
        <dbReference type="ChEBI" id="CHEBI:15377"/>
        <dbReference type="ChEBI" id="CHEBI:15378"/>
        <dbReference type="ChEBI" id="CHEBI:29985"/>
        <dbReference type="ChEBI" id="CHEBI:30616"/>
        <dbReference type="ChEBI" id="CHEBI:33019"/>
        <dbReference type="ChEBI" id="CHEBI:57464"/>
        <dbReference type="ChEBI" id="CHEBI:58115"/>
        <dbReference type="ChEBI" id="CHEBI:58359"/>
        <dbReference type="ChEBI" id="CHEBI:456215"/>
        <dbReference type="EC" id="6.3.5.2"/>
    </reaction>
</comment>
<comment type="pathway">
    <text evidence="1">Purine metabolism; GMP biosynthesis; GMP from XMP (L-Gln route): step 1/1.</text>
</comment>
<comment type="subunit">
    <text evidence="1">Homodimer.</text>
</comment>
<organism>
    <name type="scientific">Helicobacter acinonychis (strain Sheeba)</name>
    <dbReference type="NCBI Taxonomy" id="382638"/>
    <lineage>
        <taxon>Bacteria</taxon>
        <taxon>Pseudomonadati</taxon>
        <taxon>Campylobacterota</taxon>
        <taxon>Epsilonproteobacteria</taxon>
        <taxon>Campylobacterales</taxon>
        <taxon>Helicobacteraceae</taxon>
        <taxon>Helicobacter</taxon>
    </lineage>
</organism>
<evidence type="ECO:0000255" key="1">
    <source>
        <dbReference type="HAMAP-Rule" id="MF_00344"/>
    </source>
</evidence>
<dbReference type="EC" id="6.3.5.2" evidence="1"/>
<dbReference type="EMBL" id="AM260522">
    <property type="protein sequence ID" value="CAJ99297.1"/>
    <property type="molecule type" value="Genomic_DNA"/>
</dbReference>
<dbReference type="RefSeq" id="WP_011577411.1">
    <property type="nucleotide sequence ID" value="NC_008229.1"/>
</dbReference>
<dbReference type="SMR" id="Q17YH9"/>
<dbReference type="STRING" id="382638.Hac_0466"/>
<dbReference type="MEROPS" id="C26.957"/>
<dbReference type="GeneID" id="31757971"/>
<dbReference type="KEGG" id="hac:Hac_0466"/>
<dbReference type="eggNOG" id="COG0518">
    <property type="taxonomic scope" value="Bacteria"/>
</dbReference>
<dbReference type="eggNOG" id="COG0519">
    <property type="taxonomic scope" value="Bacteria"/>
</dbReference>
<dbReference type="HOGENOM" id="CLU_014340_0_5_7"/>
<dbReference type="OrthoDB" id="9802219at2"/>
<dbReference type="BioCyc" id="HACI382638:HAC_RS02135-MONOMER"/>
<dbReference type="UniPathway" id="UPA00189">
    <property type="reaction ID" value="UER00296"/>
</dbReference>
<dbReference type="Proteomes" id="UP000000775">
    <property type="component" value="Chromosome"/>
</dbReference>
<dbReference type="GO" id="GO:0005829">
    <property type="term" value="C:cytosol"/>
    <property type="evidence" value="ECO:0007669"/>
    <property type="project" value="TreeGrafter"/>
</dbReference>
<dbReference type="GO" id="GO:0005524">
    <property type="term" value="F:ATP binding"/>
    <property type="evidence" value="ECO:0007669"/>
    <property type="project" value="UniProtKB-UniRule"/>
</dbReference>
<dbReference type="GO" id="GO:0003921">
    <property type="term" value="F:GMP synthase activity"/>
    <property type="evidence" value="ECO:0007669"/>
    <property type="project" value="InterPro"/>
</dbReference>
<dbReference type="CDD" id="cd01742">
    <property type="entry name" value="GATase1_GMP_Synthase"/>
    <property type="match status" value="1"/>
</dbReference>
<dbReference type="CDD" id="cd01997">
    <property type="entry name" value="GMP_synthase_C"/>
    <property type="match status" value="1"/>
</dbReference>
<dbReference type="FunFam" id="3.30.300.10:FF:000002">
    <property type="entry name" value="GMP synthase [glutamine-hydrolyzing]"/>
    <property type="match status" value="1"/>
</dbReference>
<dbReference type="FunFam" id="3.40.50.620:FF:000001">
    <property type="entry name" value="GMP synthase [glutamine-hydrolyzing]"/>
    <property type="match status" value="1"/>
</dbReference>
<dbReference type="FunFam" id="3.40.50.880:FF:000001">
    <property type="entry name" value="GMP synthase [glutamine-hydrolyzing]"/>
    <property type="match status" value="1"/>
</dbReference>
<dbReference type="Gene3D" id="3.30.300.10">
    <property type="match status" value="1"/>
</dbReference>
<dbReference type="Gene3D" id="3.40.50.880">
    <property type="match status" value="1"/>
</dbReference>
<dbReference type="Gene3D" id="3.40.50.620">
    <property type="entry name" value="HUPs"/>
    <property type="match status" value="1"/>
</dbReference>
<dbReference type="HAMAP" id="MF_00344">
    <property type="entry name" value="GMP_synthase"/>
    <property type="match status" value="1"/>
</dbReference>
<dbReference type="InterPro" id="IPR029062">
    <property type="entry name" value="Class_I_gatase-like"/>
</dbReference>
<dbReference type="InterPro" id="IPR017926">
    <property type="entry name" value="GATASE"/>
</dbReference>
<dbReference type="InterPro" id="IPR001674">
    <property type="entry name" value="GMP_synth_C"/>
</dbReference>
<dbReference type="InterPro" id="IPR004739">
    <property type="entry name" value="GMP_synth_GATase"/>
</dbReference>
<dbReference type="InterPro" id="IPR022955">
    <property type="entry name" value="GMP_synthase"/>
</dbReference>
<dbReference type="InterPro" id="IPR025777">
    <property type="entry name" value="GMPS_ATP_PPase_dom"/>
</dbReference>
<dbReference type="InterPro" id="IPR022310">
    <property type="entry name" value="NAD/GMP_synthase"/>
</dbReference>
<dbReference type="InterPro" id="IPR014729">
    <property type="entry name" value="Rossmann-like_a/b/a_fold"/>
</dbReference>
<dbReference type="NCBIfam" id="TIGR00884">
    <property type="entry name" value="guaA_Cterm"/>
    <property type="match status" value="1"/>
</dbReference>
<dbReference type="NCBIfam" id="TIGR00888">
    <property type="entry name" value="guaA_Nterm"/>
    <property type="match status" value="1"/>
</dbReference>
<dbReference type="NCBIfam" id="NF000848">
    <property type="entry name" value="PRK00074.1"/>
    <property type="match status" value="1"/>
</dbReference>
<dbReference type="PANTHER" id="PTHR11922:SF2">
    <property type="entry name" value="GMP SYNTHASE [GLUTAMINE-HYDROLYZING]"/>
    <property type="match status" value="1"/>
</dbReference>
<dbReference type="PANTHER" id="PTHR11922">
    <property type="entry name" value="GMP SYNTHASE-RELATED"/>
    <property type="match status" value="1"/>
</dbReference>
<dbReference type="Pfam" id="PF00117">
    <property type="entry name" value="GATase"/>
    <property type="match status" value="1"/>
</dbReference>
<dbReference type="Pfam" id="PF00958">
    <property type="entry name" value="GMP_synt_C"/>
    <property type="match status" value="1"/>
</dbReference>
<dbReference type="Pfam" id="PF02540">
    <property type="entry name" value="NAD_synthase"/>
    <property type="match status" value="1"/>
</dbReference>
<dbReference type="PRINTS" id="PR00097">
    <property type="entry name" value="ANTSNTHASEII"/>
</dbReference>
<dbReference type="PRINTS" id="PR00096">
    <property type="entry name" value="GATASE"/>
</dbReference>
<dbReference type="SUPFAM" id="SSF52402">
    <property type="entry name" value="Adenine nucleotide alpha hydrolases-like"/>
    <property type="match status" value="1"/>
</dbReference>
<dbReference type="SUPFAM" id="SSF52317">
    <property type="entry name" value="Class I glutamine amidotransferase-like"/>
    <property type="match status" value="1"/>
</dbReference>
<dbReference type="SUPFAM" id="SSF54810">
    <property type="entry name" value="GMP synthetase C-terminal dimerisation domain"/>
    <property type="match status" value="1"/>
</dbReference>
<dbReference type="PROSITE" id="PS51273">
    <property type="entry name" value="GATASE_TYPE_1"/>
    <property type="match status" value="1"/>
</dbReference>
<dbReference type="PROSITE" id="PS51553">
    <property type="entry name" value="GMPS_ATP_PPASE"/>
    <property type="match status" value="1"/>
</dbReference>
<sequence>MIVVLDFGSQYTQLIARRLRESGIYAEIVPFFESTENIQKKAPKGLILSGGPASVYAKDAYTPSEKIFDLNLPILGICYGMQYLVDFFGGAVACANEQEFGKAALEIIQDSVIFKGVKAKSLVWMSHMDKVITLPKGFTTIAKSPNSLHCAIESGKVFGLQFHPEVIQSEEGGKILENFALLVCGCEKTWGMQNFAQKEMTRLKEKISDARVLCAVSGGVDSTVVATLLHRAIKDNLIAVFVDHGLLRKNEKEKVQAMFKDLQIPLNTIDAKEIFLSKLKGVSEPELKRKIIGETFIEVFEKEAKKHHLKGKIEFLAQGTLYPDVIESVSVKGPSKVIKSHHNVGGLPEWMDFKLIEPLRELFKDEVRLLGKELGVSQDFLMRHPFPGPGLAVRILGEVSESKIKCLQEADFIFIEELKKANLYDKVWQAFCVLLNAHSVGVMGDNRTYENAICLRAVDASDGMTASFSHLGHSFLEKVSNRITNEVSGINRVVYDITSKPPGTIEWE</sequence>